<evidence type="ECO:0000255" key="1">
    <source>
        <dbReference type="HAMAP-Rule" id="MF_00093"/>
    </source>
</evidence>
<organism>
    <name type="scientific">Prochlorococcus marinus (strain MIT 9211)</name>
    <dbReference type="NCBI Taxonomy" id="93059"/>
    <lineage>
        <taxon>Bacteria</taxon>
        <taxon>Bacillati</taxon>
        <taxon>Cyanobacteriota</taxon>
        <taxon>Cyanophyceae</taxon>
        <taxon>Synechococcales</taxon>
        <taxon>Prochlorococcaceae</taxon>
        <taxon>Prochlorococcus</taxon>
    </lineage>
</organism>
<keyword id="KW-0963">Cytoplasm</keyword>
<keyword id="KW-0488">Methylation</keyword>
<keyword id="KW-0648">Protein biosynthesis</keyword>
<keyword id="KW-1185">Reference proteome</keyword>
<sequence length="365" mass="40939">MDTSTLKIRLETARSSFQNLELQLADPDVASDPKRLETIARERARLEPLVLDYEKLLEIEEELLEVKDVLRESKSDKDLEELAQDEMRKLELFKTNLINQLTLALLPKDPRDERSVMLEIRAGAGGDEACIWAGDLARMYERYGQKIGWSVRPISSTDADLGGFRELIISVKGDSVFSQLKFEAGVHRVQRVPATESQGRVHTSTATVAVMPEADPVEVQLDPGDLEISTARSGGAGGQNVNKVETAVDLLHKPTGIRVFCTQERSQLQNRERAMEILRAKLLEMEIAEANAKERSARLAQVGTGDRSEKIRTYNYKDNRTTDHRLGINFPLENVLEGELDNLIGACIAEEQRLMIEELGEQSEN</sequence>
<dbReference type="EMBL" id="CP000878">
    <property type="protein sequence ID" value="ABX09580.1"/>
    <property type="molecule type" value="Genomic_DNA"/>
</dbReference>
<dbReference type="RefSeq" id="WP_012196201.1">
    <property type="nucleotide sequence ID" value="NC_009976.1"/>
</dbReference>
<dbReference type="SMR" id="A9BCL8"/>
<dbReference type="STRING" id="93059.P9211_16491"/>
<dbReference type="KEGG" id="pmj:P9211_16491"/>
<dbReference type="eggNOG" id="COG0216">
    <property type="taxonomic scope" value="Bacteria"/>
</dbReference>
<dbReference type="HOGENOM" id="CLU_036856_0_1_3"/>
<dbReference type="OrthoDB" id="9806673at2"/>
<dbReference type="Proteomes" id="UP000000788">
    <property type="component" value="Chromosome"/>
</dbReference>
<dbReference type="GO" id="GO:0005737">
    <property type="term" value="C:cytoplasm"/>
    <property type="evidence" value="ECO:0007669"/>
    <property type="project" value="UniProtKB-SubCell"/>
</dbReference>
<dbReference type="GO" id="GO:0016149">
    <property type="term" value="F:translation release factor activity, codon specific"/>
    <property type="evidence" value="ECO:0007669"/>
    <property type="project" value="UniProtKB-UniRule"/>
</dbReference>
<dbReference type="FunFam" id="3.30.160.20:FF:000004">
    <property type="entry name" value="Peptide chain release factor 1"/>
    <property type="match status" value="1"/>
</dbReference>
<dbReference type="FunFam" id="3.30.70.1660:FF:000002">
    <property type="entry name" value="Peptide chain release factor 1"/>
    <property type="match status" value="1"/>
</dbReference>
<dbReference type="Gene3D" id="3.30.160.20">
    <property type="match status" value="1"/>
</dbReference>
<dbReference type="Gene3D" id="3.30.70.1660">
    <property type="match status" value="1"/>
</dbReference>
<dbReference type="Gene3D" id="6.10.140.1950">
    <property type="match status" value="1"/>
</dbReference>
<dbReference type="HAMAP" id="MF_00093">
    <property type="entry name" value="Rel_fac_1"/>
    <property type="match status" value="1"/>
</dbReference>
<dbReference type="InterPro" id="IPR005139">
    <property type="entry name" value="PCRF"/>
</dbReference>
<dbReference type="InterPro" id="IPR000352">
    <property type="entry name" value="Pep_chain_release_fac_I"/>
</dbReference>
<dbReference type="InterPro" id="IPR045853">
    <property type="entry name" value="Pep_chain_release_fac_I_sf"/>
</dbReference>
<dbReference type="InterPro" id="IPR050057">
    <property type="entry name" value="Prokaryotic/Mito_RF"/>
</dbReference>
<dbReference type="InterPro" id="IPR004373">
    <property type="entry name" value="RF-1"/>
</dbReference>
<dbReference type="NCBIfam" id="TIGR00019">
    <property type="entry name" value="prfA"/>
    <property type="match status" value="1"/>
</dbReference>
<dbReference type="NCBIfam" id="NF001859">
    <property type="entry name" value="PRK00591.1"/>
    <property type="match status" value="1"/>
</dbReference>
<dbReference type="PANTHER" id="PTHR43804">
    <property type="entry name" value="LD18447P"/>
    <property type="match status" value="1"/>
</dbReference>
<dbReference type="PANTHER" id="PTHR43804:SF8">
    <property type="entry name" value="PEPTIDE CHAIN RELEASE FACTOR APG3, CHLOROPLASTIC"/>
    <property type="match status" value="1"/>
</dbReference>
<dbReference type="Pfam" id="PF03462">
    <property type="entry name" value="PCRF"/>
    <property type="match status" value="1"/>
</dbReference>
<dbReference type="Pfam" id="PF00472">
    <property type="entry name" value="RF-1"/>
    <property type="match status" value="1"/>
</dbReference>
<dbReference type="SMART" id="SM00937">
    <property type="entry name" value="PCRF"/>
    <property type="match status" value="1"/>
</dbReference>
<dbReference type="SUPFAM" id="SSF75620">
    <property type="entry name" value="Release factor"/>
    <property type="match status" value="1"/>
</dbReference>
<dbReference type="PROSITE" id="PS00745">
    <property type="entry name" value="RF_PROK_I"/>
    <property type="match status" value="1"/>
</dbReference>
<protein>
    <recommendedName>
        <fullName evidence="1">Peptide chain release factor 1</fullName>
        <shortName evidence="1">RF-1</shortName>
    </recommendedName>
</protein>
<comment type="function">
    <text evidence="1">Peptide chain release factor 1 directs the termination of translation in response to the peptide chain termination codons UAG and UAA.</text>
</comment>
<comment type="subcellular location">
    <subcellularLocation>
        <location evidence="1">Cytoplasm</location>
    </subcellularLocation>
</comment>
<comment type="PTM">
    <text evidence="1">Methylated by PrmC. Methylation increases the termination efficiency of RF1.</text>
</comment>
<comment type="similarity">
    <text evidence="1">Belongs to the prokaryotic/mitochondrial release factor family.</text>
</comment>
<proteinExistence type="inferred from homology"/>
<reference key="1">
    <citation type="journal article" date="2007" name="PLoS Genet.">
        <title>Patterns and implications of gene gain and loss in the evolution of Prochlorococcus.</title>
        <authorList>
            <person name="Kettler G.C."/>
            <person name="Martiny A.C."/>
            <person name="Huang K."/>
            <person name="Zucker J."/>
            <person name="Coleman M.L."/>
            <person name="Rodrigue S."/>
            <person name="Chen F."/>
            <person name="Lapidus A."/>
            <person name="Ferriera S."/>
            <person name="Johnson J."/>
            <person name="Steglich C."/>
            <person name="Church G.M."/>
            <person name="Richardson P."/>
            <person name="Chisholm S.W."/>
        </authorList>
    </citation>
    <scope>NUCLEOTIDE SEQUENCE [LARGE SCALE GENOMIC DNA]</scope>
    <source>
        <strain>MIT 9211</strain>
    </source>
</reference>
<accession>A9BCL8</accession>
<feature type="chain" id="PRO_1000093488" description="Peptide chain release factor 1">
    <location>
        <begin position="1"/>
        <end position="365"/>
    </location>
</feature>
<feature type="modified residue" description="N5-methylglutamine" evidence="1">
    <location>
        <position position="239"/>
    </location>
</feature>
<name>RF1_PROM4</name>
<gene>
    <name evidence="1" type="primary">prfA</name>
    <name type="ordered locus">P9211_16491</name>
</gene>